<evidence type="ECO:0000305" key="1"/>
<proteinExistence type="inferred from homology"/>
<name>HDDL_ALCXX</name>
<comment type="function">
    <text>Dehalogenates both (S)- and (R)-2-haloalkanoic acids to the corresponding (R)- and (S)-hydroxyalkanoic acids, respectively, with inversion of configuration at C-2. Acts on 2-haloalkanoic acids whose carbon chain lengths are five or less.</text>
</comment>
<comment type="catalytic activity">
    <reaction>
        <text>an (S)-2-haloacid + H2O = a (2R)-2-hydroxycarboxylate + a halide anion + H(+)</text>
        <dbReference type="Rhea" id="RHEA:11192"/>
        <dbReference type="ChEBI" id="CHEBI:15377"/>
        <dbReference type="ChEBI" id="CHEBI:15378"/>
        <dbReference type="ChEBI" id="CHEBI:16042"/>
        <dbReference type="ChEBI" id="CHEBI:58314"/>
        <dbReference type="ChEBI" id="CHEBI:137405"/>
        <dbReference type="EC" id="3.8.1.10"/>
    </reaction>
</comment>
<comment type="catalytic activity">
    <reaction>
        <text>an (R)-2-haloacid + H2O = a (2S)-2-hydroxycarboxylate + a halide anion + H(+)</text>
        <dbReference type="Rhea" id="RHEA:22188"/>
        <dbReference type="ChEBI" id="CHEBI:15377"/>
        <dbReference type="ChEBI" id="CHEBI:15378"/>
        <dbReference type="ChEBI" id="CHEBI:16042"/>
        <dbReference type="ChEBI" id="CHEBI:58123"/>
        <dbReference type="ChEBI" id="CHEBI:137406"/>
        <dbReference type="EC" id="3.8.1.10"/>
    </reaction>
</comment>
<comment type="similarity">
    <text evidence="1">Belongs to the HAD-like hydrolase superfamily. S-2-haloalkanoic acid dehalogenase family.</text>
</comment>
<dbReference type="EC" id="3.8.1.10"/>
<dbReference type="EMBL" id="X77610">
    <property type="protein sequence ID" value="CAA54701.1"/>
    <property type="molecule type" value="Genomic_DNA"/>
</dbReference>
<dbReference type="PIR" id="S42024">
    <property type="entry name" value="S42024"/>
</dbReference>
<dbReference type="SMR" id="Q59168"/>
<dbReference type="BRENDA" id="3.8.1.10">
    <property type="organism ID" value="238"/>
</dbReference>
<dbReference type="GO" id="GO:0033975">
    <property type="term" value="F:(R)-2-haloacid dehalogenase activity"/>
    <property type="evidence" value="ECO:0007669"/>
    <property type="project" value="RHEA"/>
</dbReference>
<dbReference type="GO" id="GO:0018784">
    <property type="term" value="F:(S)-2-haloacid dehalogenase activity"/>
    <property type="evidence" value="ECO:0007669"/>
    <property type="project" value="RHEA"/>
</dbReference>
<dbReference type="GO" id="GO:0033976">
    <property type="term" value="F:2-haloacid dehalogenase (configuration-inverting) activity"/>
    <property type="evidence" value="ECO:0007669"/>
    <property type="project" value="UniProtKB-EC"/>
</dbReference>
<dbReference type="InterPro" id="IPR019714">
    <property type="entry name" value="2-haloacid_dehalogenase_DehI"/>
</dbReference>
<dbReference type="Pfam" id="PF10778">
    <property type="entry name" value="DehI"/>
    <property type="match status" value="1"/>
</dbReference>
<keyword id="KW-0378">Hydrolase</keyword>
<keyword id="KW-0614">Plasmid</keyword>
<protein>
    <recommendedName>
        <fullName>2-haloacid dehalogenase, configuration-inverting</fullName>
        <ecNumber>3.8.1.10</ecNumber>
    </recommendedName>
    <alternativeName>
        <fullName>DL-2-haloacid dehalogenase</fullName>
    </alternativeName>
    <alternativeName>
        <fullName>DL-DEXi</fullName>
    </alternativeName>
</protein>
<feature type="chain" id="PRO_0000079171" description="2-haloacid dehalogenase, configuration-inverting">
    <location>
        <begin position="1"/>
        <end position="296"/>
    </location>
</feature>
<geneLocation type="plasmid">
    <name>pFL40</name>
</geneLocation>
<organism>
    <name type="scientific">Alcaligenes xylosoxydans xylosoxydans</name>
    <name type="common">Achromobacter xylosoxidans</name>
    <dbReference type="NCBI Taxonomy" id="85698"/>
    <lineage>
        <taxon>Bacteria</taxon>
        <taxon>Pseudomonadati</taxon>
        <taxon>Pseudomonadota</taxon>
        <taxon>Betaproteobacteria</taxon>
        <taxon>Burkholderiales</taxon>
        <taxon>Alcaligenaceae</taxon>
        <taxon>Achromobacter</taxon>
    </lineage>
</organism>
<reference key="1">
    <citation type="journal article" date="1996" name="Biodegradation">
        <title>Cloning and nucleotide sequence of a D,L-haloalkanoic acid dehalogenase encoding gene from Alcaligenes xylosoxidans ssp. denitrificans ABIV.</title>
        <authorList>
            <person name="Brokamp A."/>
            <person name="Happe B."/>
            <person name="Schmidt F.R.J."/>
        </authorList>
    </citation>
    <scope>NUCLEOTIDE SEQUENCE [GENOMIC DNA]</scope>
</reference>
<sequence>MTNPAYFPQLSQLDVSGEMESTYEDIRLTLRVPWVAFGCRVLATFPGYLPLAWRRSAEALITRYAEQAADELRERSLLNIGPLPNLKERLYAAGFDDGEIEKVRRVLYAFNYGNPKYLLLITALSESMQMRPVGGAEVSSELRASIPKGHPKGMDPLLPLVDATKASTEVQGLLKRVADLHYHHGPASDFQALANWPKVLQIVTDEVLAPVARTEQYDAKSRELVTRARELVRGLPGSAGVQRSELMSMLTPNELAGLTGVLFMYQRFIADITISIIHITECLDGAEAASKSPFPI</sequence>
<accession>Q59168</accession>
<gene>
    <name type="primary">dhlC</name>
    <name type="synonym">dhlIV</name>
</gene>